<gene>
    <name evidence="1" type="primary">CLPB</name>
    <name type="synonym">SKD3</name>
</gene>
<dbReference type="EC" id="3.6.1.-" evidence="1"/>
<dbReference type="EMBL" id="BT020885">
    <property type="protein sequence ID" value="AAX08902.1"/>
    <property type="molecule type" value="mRNA"/>
</dbReference>
<dbReference type="EMBL" id="BC103469">
    <property type="protein sequence ID" value="AAI03470.1"/>
    <property type="molecule type" value="mRNA"/>
</dbReference>
<dbReference type="RefSeq" id="NP_001015625.1">
    <property type="nucleotide sequence ID" value="NM_001015625.1"/>
</dbReference>
<dbReference type="SMR" id="Q5E9N5"/>
<dbReference type="FunCoup" id="Q5E9N5">
    <property type="interactions" value="629"/>
</dbReference>
<dbReference type="STRING" id="9913.ENSBTAP00000001687"/>
<dbReference type="PaxDb" id="9913-ENSBTAP00000001687"/>
<dbReference type="GeneID" id="520639"/>
<dbReference type="KEGG" id="bta:520639"/>
<dbReference type="CTD" id="81570"/>
<dbReference type="VEuPathDB" id="HostDB:ENSBTAG00000001280"/>
<dbReference type="eggNOG" id="KOG1051">
    <property type="taxonomic scope" value="Eukaryota"/>
</dbReference>
<dbReference type="HOGENOM" id="CLU_005070_9_3_1"/>
<dbReference type="InParanoid" id="Q5E9N5"/>
<dbReference type="OMA" id="ARYMHRD"/>
<dbReference type="OrthoDB" id="47330at2759"/>
<dbReference type="TreeFam" id="TF328654"/>
<dbReference type="Proteomes" id="UP000009136">
    <property type="component" value="Chromosome 15"/>
</dbReference>
<dbReference type="Bgee" id="ENSBTAG00000001280">
    <property type="expression patterns" value="Expressed in spermatid and 110 other cell types or tissues"/>
</dbReference>
<dbReference type="GO" id="GO:0005737">
    <property type="term" value="C:cytoplasm"/>
    <property type="evidence" value="ECO:0000318"/>
    <property type="project" value="GO_Central"/>
</dbReference>
<dbReference type="GO" id="GO:0005758">
    <property type="term" value="C:mitochondrial intermembrane space"/>
    <property type="evidence" value="ECO:0000250"/>
    <property type="project" value="UniProtKB"/>
</dbReference>
<dbReference type="GO" id="GO:0005739">
    <property type="term" value="C:mitochondrion"/>
    <property type="evidence" value="ECO:0000318"/>
    <property type="project" value="GO_Central"/>
</dbReference>
<dbReference type="GO" id="GO:0005524">
    <property type="term" value="F:ATP binding"/>
    <property type="evidence" value="ECO:0007669"/>
    <property type="project" value="UniProtKB-KW"/>
</dbReference>
<dbReference type="GO" id="GO:0016887">
    <property type="term" value="F:ATP hydrolysis activity"/>
    <property type="evidence" value="ECO:0000318"/>
    <property type="project" value="GO_Central"/>
</dbReference>
<dbReference type="GO" id="GO:0034605">
    <property type="term" value="P:cellular response to heat"/>
    <property type="evidence" value="ECO:0000318"/>
    <property type="project" value="GO_Central"/>
</dbReference>
<dbReference type="CDD" id="cd19499">
    <property type="entry name" value="RecA-like_ClpB_Hsp104-like"/>
    <property type="match status" value="1"/>
</dbReference>
<dbReference type="FunFam" id="1.10.8.60:FF:000040">
    <property type="entry name" value="caseinolytic peptidase B protein homolog isoform X1"/>
    <property type="match status" value="1"/>
</dbReference>
<dbReference type="FunFam" id="1.25.40.20:FF:000203">
    <property type="entry name" value="caseinolytic peptidase B protein homolog isoform X1"/>
    <property type="match status" value="1"/>
</dbReference>
<dbReference type="FunFam" id="3.40.50.300:FF:000641">
    <property type="entry name" value="caseinolytic peptidase B protein homolog isoform X2"/>
    <property type="match status" value="1"/>
</dbReference>
<dbReference type="Gene3D" id="1.10.8.60">
    <property type="match status" value="1"/>
</dbReference>
<dbReference type="Gene3D" id="1.25.40.20">
    <property type="entry name" value="Ankyrin repeat-containing domain"/>
    <property type="match status" value="1"/>
</dbReference>
<dbReference type="Gene3D" id="3.40.50.300">
    <property type="entry name" value="P-loop containing nucleotide triphosphate hydrolases"/>
    <property type="match status" value="1"/>
</dbReference>
<dbReference type="InterPro" id="IPR003593">
    <property type="entry name" value="AAA+_ATPase"/>
</dbReference>
<dbReference type="InterPro" id="IPR002110">
    <property type="entry name" value="Ankyrin_rpt"/>
</dbReference>
<dbReference type="InterPro" id="IPR036770">
    <property type="entry name" value="Ankyrin_rpt-contain_sf"/>
</dbReference>
<dbReference type="InterPro" id="IPR003959">
    <property type="entry name" value="ATPase_AAA_core"/>
</dbReference>
<dbReference type="InterPro" id="IPR019489">
    <property type="entry name" value="Clp_ATPase_C"/>
</dbReference>
<dbReference type="InterPro" id="IPR001270">
    <property type="entry name" value="ClpA/B"/>
</dbReference>
<dbReference type="InterPro" id="IPR050130">
    <property type="entry name" value="ClpA_ClpB"/>
</dbReference>
<dbReference type="InterPro" id="IPR027417">
    <property type="entry name" value="P-loop_NTPase"/>
</dbReference>
<dbReference type="PANTHER" id="PTHR11638">
    <property type="entry name" value="ATP-DEPENDENT CLP PROTEASE"/>
    <property type="match status" value="1"/>
</dbReference>
<dbReference type="PANTHER" id="PTHR11638:SF93">
    <property type="entry name" value="MITOCHONDRIAL DISAGGREGASE"/>
    <property type="match status" value="1"/>
</dbReference>
<dbReference type="Pfam" id="PF07724">
    <property type="entry name" value="AAA_2"/>
    <property type="match status" value="1"/>
</dbReference>
<dbReference type="Pfam" id="PF12796">
    <property type="entry name" value="Ank_2"/>
    <property type="match status" value="2"/>
</dbReference>
<dbReference type="Pfam" id="PF10431">
    <property type="entry name" value="ClpB_D2-small"/>
    <property type="match status" value="1"/>
</dbReference>
<dbReference type="PRINTS" id="PR00300">
    <property type="entry name" value="CLPPROTEASEA"/>
</dbReference>
<dbReference type="SMART" id="SM00382">
    <property type="entry name" value="AAA"/>
    <property type="match status" value="1"/>
</dbReference>
<dbReference type="SMART" id="SM00248">
    <property type="entry name" value="ANK"/>
    <property type="match status" value="3"/>
</dbReference>
<dbReference type="SMART" id="SM01086">
    <property type="entry name" value="ClpB_D2-small"/>
    <property type="match status" value="1"/>
</dbReference>
<dbReference type="SUPFAM" id="SSF48403">
    <property type="entry name" value="Ankyrin repeat"/>
    <property type="match status" value="1"/>
</dbReference>
<dbReference type="SUPFAM" id="SSF52540">
    <property type="entry name" value="P-loop containing nucleoside triphosphate hydrolases"/>
    <property type="match status" value="1"/>
</dbReference>
<dbReference type="PROSITE" id="PS50297">
    <property type="entry name" value="ANK_REP_REGION"/>
    <property type="match status" value="1"/>
</dbReference>
<dbReference type="PROSITE" id="PS50088">
    <property type="entry name" value="ANK_REPEAT"/>
    <property type="match status" value="3"/>
</dbReference>
<reference key="1">
    <citation type="journal article" date="2005" name="BMC Genomics">
        <title>Characterization of 954 bovine full-CDS cDNA sequences.</title>
        <authorList>
            <person name="Harhay G.P."/>
            <person name="Sonstegard T.S."/>
            <person name="Keele J.W."/>
            <person name="Heaton M.P."/>
            <person name="Clawson M.L."/>
            <person name="Snelling W.M."/>
            <person name="Wiedmann R.T."/>
            <person name="Van Tassell C.P."/>
            <person name="Smith T.P.L."/>
        </authorList>
    </citation>
    <scope>NUCLEOTIDE SEQUENCE [LARGE SCALE MRNA]</scope>
</reference>
<reference key="2">
    <citation type="submission" date="2005-08" db="EMBL/GenBank/DDBJ databases">
        <authorList>
            <consortium name="NIH - Mammalian Gene Collection (MGC) project"/>
        </authorList>
    </citation>
    <scope>NUCLEOTIDE SEQUENCE [LARGE SCALE MRNA]</scope>
    <source>
        <strain>Hereford</strain>
        <tissue>Uterus</tissue>
    </source>
</reference>
<feature type="transit peptide" description="Mitochondrion" evidence="2">
    <location>
        <begin position="1"/>
        <end position="28"/>
    </location>
</feature>
<feature type="chain" id="PRO_0000286349" description="Mitochondrial disaggregase">
    <location>
        <begin position="29"/>
        <end position="677"/>
    </location>
</feature>
<feature type="chain" id="PRO_0000458240" description="Mitochondrial disaggregase, cleaved form" evidence="1">
    <location>
        <begin position="127"/>
        <end position="677"/>
    </location>
</feature>
<feature type="repeat" description="ANK 1">
    <location>
        <begin position="133"/>
        <end position="162"/>
    </location>
</feature>
<feature type="repeat" description="ANK 2">
    <location>
        <begin position="166"/>
        <end position="195"/>
    </location>
</feature>
<feature type="repeat" description="ANK 3">
    <location>
        <begin position="235"/>
        <end position="265"/>
    </location>
</feature>
<feature type="repeat" description="ANK 4">
    <location>
        <begin position="268"/>
        <end position="297"/>
    </location>
</feature>
<feature type="region of interest" description="Autoinhibitory" evidence="1">
    <location>
        <begin position="92"/>
        <end position="126"/>
    </location>
</feature>
<feature type="region of interest" description="Regulatory; slows ATPase and disaggregase activities" evidence="1">
    <location>
        <begin position="477"/>
        <end position="505"/>
    </location>
</feature>
<feature type="binding site" evidence="1">
    <location>
        <position position="316"/>
    </location>
    <ligand>
        <name>ATP</name>
        <dbReference type="ChEBI" id="CHEBI:30616"/>
    </ligand>
</feature>
<feature type="binding site" evidence="1">
    <location>
        <position position="318"/>
    </location>
    <ligand>
        <name>ATP</name>
        <dbReference type="ChEBI" id="CHEBI:30616"/>
    </ligand>
</feature>
<feature type="binding site" evidence="1">
    <location>
        <position position="353"/>
    </location>
    <ligand>
        <name>ATP</name>
        <dbReference type="ChEBI" id="CHEBI:30616"/>
    </ligand>
</feature>
<feature type="binding site" evidence="1">
    <location>
        <position position="354"/>
    </location>
    <ligand>
        <name>ATP</name>
        <dbReference type="ChEBI" id="CHEBI:30616"/>
    </ligand>
</feature>
<feature type="binding site" evidence="1">
    <location>
        <position position="355"/>
    </location>
    <ligand>
        <name>ATP</name>
        <dbReference type="ChEBI" id="CHEBI:30616"/>
    </ligand>
</feature>
<feature type="binding site" evidence="1">
    <location>
        <position position="356"/>
    </location>
    <ligand>
        <name>ATP</name>
        <dbReference type="ChEBI" id="CHEBI:30616"/>
    </ligand>
</feature>
<feature type="binding site" evidence="1">
    <location>
        <position position="357"/>
    </location>
    <ligand>
        <name>ATP</name>
        <dbReference type="ChEBI" id="CHEBI:30616"/>
    </ligand>
</feature>
<feature type="binding site" evidence="1">
    <location>
        <position position="358"/>
    </location>
    <ligand>
        <name>ATP</name>
        <dbReference type="ChEBI" id="CHEBI:30616"/>
    </ligand>
</feature>
<feature type="binding site" evidence="1">
    <location>
        <position position="425"/>
    </location>
    <ligand>
        <name>ATP</name>
        <dbReference type="ChEBI" id="CHEBI:30616"/>
    </ligand>
</feature>
<feature type="binding site" evidence="1">
    <location>
        <position position="466"/>
    </location>
    <ligand>
        <name>ATP</name>
        <dbReference type="ChEBI" id="CHEBI:30616"/>
    </ligand>
</feature>
<feature type="binding site" evidence="1">
    <location>
        <position position="531"/>
    </location>
    <ligand>
        <name>ATP</name>
        <dbReference type="ChEBI" id="CHEBI:30616"/>
    </ligand>
</feature>
<feature type="binding site" evidence="1">
    <location>
        <position position="590"/>
    </location>
    <ligand>
        <name>ATP</name>
        <dbReference type="ChEBI" id="CHEBI:30616"/>
    </ligand>
</feature>
<feature type="site" description="Cleavage; by PARL" evidence="1">
    <location>
        <begin position="126"/>
        <end position="127"/>
    </location>
</feature>
<feature type="modified residue" description="N6-acetyllysine" evidence="1">
    <location>
        <position position="559"/>
    </location>
</feature>
<accession>Q5E9N5</accession>
<proteinExistence type="evidence at transcript level"/>
<evidence type="ECO:0000250" key="1">
    <source>
        <dbReference type="UniProtKB" id="Q9H078"/>
    </source>
</evidence>
<evidence type="ECO:0000255" key="2"/>
<evidence type="ECO:0000305" key="3"/>
<keyword id="KW-0007">Acetylation</keyword>
<keyword id="KW-0040">ANK repeat</keyword>
<keyword id="KW-0067">ATP-binding</keyword>
<keyword id="KW-0378">Hydrolase</keyword>
<keyword id="KW-0496">Mitochondrion</keyword>
<keyword id="KW-0547">Nucleotide-binding</keyword>
<keyword id="KW-1185">Reference proteome</keyword>
<keyword id="KW-0677">Repeat</keyword>
<keyword id="KW-0809">Transit peptide</keyword>
<comment type="function">
    <text evidence="1">Functions as a regulatory ATPase and participates in secretion/protein trafficking process. Has ATP-dependent protein disaggregase activity and is required to maintain the solubility of key mitochondrial proteins. Involved in mitochondrial-mediated antiviral innate immunity, activates RIG-I-mediated signal transduction and production of IFNB1 and pro-inflammatory cytokine IL6. Plays a role in granulocyte differentiation.</text>
</comment>
<comment type="catalytic activity">
    <reaction evidence="1">
        <text>ATP + H2O = ADP + phosphate + H(+)</text>
        <dbReference type="Rhea" id="RHEA:13065"/>
        <dbReference type="ChEBI" id="CHEBI:15377"/>
        <dbReference type="ChEBI" id="CHEBI:15378"/>
        <dbReference type="ChEBI" id="CHEBI:30616"/>
        <dbReference type="ChEBI" id="CHEBI:43474"/>
        <dbReference type="ChEBI" id="CHEBI:456216"/>
    </reaction>
</comment>
<comment type="activity regulation">
    <text evidence="1">Disaggregase activity is inhibited by ADP.</text>
</comment>
<comment type="subunit">
    <text evidence="1">Homododecamer when substrate-bound; the homododecamer consists of 2 homohexamers stacked head-to-head via ANK repeat-mediated interactions. The active substrate-bound form is likely to exist in a dynamic equilibrium between homohexamers and homododecamers. Homotetradecamer in the unbound state which is remodeled upon substrate binding into the homododecamer. Interacts with PHB and PHB2. Interacts with MAVS; the interaction is enhanced by Sendai virus infection.</text>
</comment>
<comment type="subcellular location">
    <subcellularLocation>
        <location evidence="1">Mitochondrion intermembrane space</location>
    </subcellularLocation>
</comment>
<comment type="domain">
    <text evidence="1">The ankyrin-repeat region is necessary for ATP-dependent protein disaggregase activity. It plays an important role in stabilizing the substrate-bound homododecamer by mediating contacts between the two homohexamers.</text>
</comment>
<comment type="PTM">
    <text evidence="1">Proteolytically cleaved by protease PARL. ATP-dependent protein disaggregase activity is stimulated by PARL-mediated cleavage of the N-terminal autoinhibitory peptide.</text>
</comment>
<comment type="similarity">
    <text evidence="3">Belongs to the ClpA/ClpB family.</text>
</comment>
<comment type="caution">
    <text evidence="3">Despite its gene name, this protein differs in domain structure from bacterial clpB. Bacterial clpB contains two AAA modules, one in the N-terminal part of the protein and one in the C-terminal part, separated by a coiled coil, while vertebrate CLPB contains a single C-terminal AAA region and an N-terminal ANK repeat region which is absent from bacterial clpB.</text>
</comment>
<organism>
    <name type="scientific">Bos taurus</name>
    <name type="common">Bovine</name>
    <dbReference type="NCBI Taxonomy" id="9913"/>
    <lineage>
        <taxon>Eukaryota</taxon>
        <taxon>Metazoa</taxon>
        <taxon>Chordata</taxon>
        <taxon>Craniata</taxon>
        <taxon>Vertebrata</taxon>
        <taxon>Euteleostomi</taxon>
        <taxon>Mammalia</taxon>
        <taxon>Eutheria</taxon>
        <taxon>Laurasiatheria</taxon>
        <taxon>Artiodactyla</taxon>
        <taxon>Ruminantia</taxon>
        <taxon>Pecora</taxon>
        <taxon>Bovidae</taxon>
        <taxon>Bovinae</taxon>
        <taxon>Bos</taxon>
    </lineage>
</organism>
<sequence>MLGSLVSKRTAPAPRLLLQLLRSPSLRSHESATGQSVTTGGRGEPQWLRAAVGGRHGTSPALLTGGGAATGGRQRGRTETPCLAAATWGRLPSPEDTLPGQDSWNGVLSRAGLGVWALATALVVHCYSKSPSSKDAALMEAARANNVQEVSRLLSEGADVNARHRLGWTALMVAAINRNDSVVQVLLAAGADPNLGDDFSSVYKTAKDQGIHSLEVLVTREDDFNNRLNNRASFKGCTALHYAVLADDYRTVKELLDGGANPLQRNEMGHTPLDYAREGEVMKLLRTSETKYQEKQRKREAEERRRFPLEQRLKEHIIGQESAIATVGAAIRRKENGWYDEEHPLVFLFLGSSGIGKTELAKQTAKYMHKDAKKGFIRLDMSEFQERHEVAKFIGSPPGYIGHEEGGQLTKKLKQCPNAVVLFDEVDKAHPDVLTIMLQLFDEGRLTDGKGKTIDCKDAIFIMTSNVASDEIAQHALQLRQEALEMSRNRIAENLGDVQISDKITISKNFKENVIRPILKAHFRRDEFLGRINEIVYFLPFCHSELIQLVNKELNFWAKRAKQRHNITLLWDREVADVLVEGYNVHYGARSIKHEVERRVVNQLAAAYEQDLLPGGCTLRITVEDSDKQLLRSPELSSSQAERRPPKLRLEIIDKDSKTHKLDIQAPLHPEKVCHTL</sequence>
<name>CLPB_BOVIN</name>
<protein>
    <recommendedName>
        <fullName>Mitochondrial disaggregase</fullName>
        <ecNumber evidence="1">3.6.1.-</ecNumber>
    </recommendedName>
    <alternativeName>
        <fullName>Suppressor of potassium transport defect 3</fullName>
    </alternativeName>
    <component>
        <recommendedName>
            <fullName>Mitochondrial disaggregase, cleaved form</fullName>
        </recommendedName>
    </component>
</protein>